<keyword id="KW-0007">Acetylation</keyword>
<keyword id="KW-0276">Fatty acid metabolism</keyword>
<keyword id="KW-0413">Isomerase</keyword>
<keyword id="KW-0443">Lipid metabolism</keyword>
<keyword id="KW-0456">Lyase</keyword>
<keyword id="KW-0496">Mitochondrion</keyword>
<keyword id="KW-0597">Phosphoprotein</keyword>
<keyword id="KW-1185">Reference proteome</keyword>
<keyword id="KW-0809">Transit peptide</keyword>
<name>ECHM_PONAB</name>
<feature type="transit peptide" description="Mitochondrion" evidence="1">
    <location>
        <begin position="1"/>
        <end position="27"/>
    </location>
</feature>
<feature type="chain" id="PRO_0000007413" description="Enoyl-CoA hydratase, mitochondrial">
    <location>
        <begin position="28"/>
        <end position="290"/>
    </location>
</feature>
<feature type="binding site" evidence="1">
    <location>
        <begin position="98"/>
        <end position="101"/>
    </location>
    <ligand>
        <name>substrate</name>
    </ligand>
</feature>
<feature type="binding site" evidence="1">
    <location>
        <position position="141"/>
    </location>
    <ligand>
        <name>substrate</name>
    </ligand>
</feature>
<feature type="site" description="Important for catalytic activity" evidence="1">
    <location>
        <position position="164"/>
    </location>
</feature>
<feature type="modified residue" description="Phosphothreonine" evidence="3">
    <location>
        <position position="46"/>
    </location>
</feature>
<feature type="modified residue" description="N6-acetyllysine; alternate" evidence="4">
    <location>
        <position position="101"/>
    </location>
</feature>
<feature type="modified residue" description="N6-succinyllysine; alternate" evidence="4">
    <location>
        <position position="101"/>
    </location>
</feature>
<feature type="modified residue" description="Phosphoserine" evidence="3">
    <location>
        <position position="114"/>
    </location>
</feature>
<feature type="modified residue" description="N6-acetyllysine; alternate" evidence="4">
    <location>
        <position position="115"/>
    </location>
</feature>
<feature type="modified residue" description="N6-succinyllysine; alternate" evidence="4">
    <location>
        <position position="115"/>
    </location>
</feature>
<feature type="modified residue" description="N6-acetyllysine" evidence="3">
    <location>
        <position position="118"/>
    </location>
</feature>
<feature type="modified residue" description="N6-succinyllysine" evidence="4">
    <location>
        <position position="204"/>
    </location>
</feature>
<feature type="modified residue" description="N6-acetyllysine" evidence="4">
    <location>
        <position position="211"/>
    </location>
</feature>
<gene>
    <name type="primary">ECHS1</name>
</gene>
<comment type="function">
    <text evidence="2 3">Converts unsaturated trans-2-enoyl-CoA species ((2E)-enoyl-CoA) to the corresponding (3S)-3-hydroxyacyl-CoA species through addition of a water molecule to the double bond. Catalyzes the hydration of medium- and short-chained fatty enoyl-CoA thioesters from 4 carbons long (C4) up to C16 (By similarity). Has high substrate specificity for crotonyl-CoA ((2E)-butenoyl-CoA) and moderate specificity for acryloyl-CoA, 3-methylcrotonyl-CoA (3-methyl-(2E)-butenoyl-CoA) and methacrylyl-CoA ((2E)-2-methylpropenoyl-CoA). Can bind tiglyl-CoA (2-methylcrotonoyl-CoA), but hydrates only a small amount of this substrate (By similarity). Plays a key role in the beta-oxidation spiral of short- and medium-chain fatty acid oxidation. At a lower rate than the hydratase reaction, catalyzes the isomerase reaction of trans-3-enoyl-CoA species (such as (3E)-hexenoyl-CoA) to trans-2-enoyl-CoA species (such as (2E)-hexenoyl-CoA), which are subsequently hydrated to 3(S)-3-hydroxyacyl-CoA species (such as (3S)-hydroxyhexanoyl-CoA) (By similarity).</text>
</comment>
<comment type="catalytic activity">
    <reaction evidence="3">
        <text>a (3S)-3-hydroxyacyl-CoA = a (2E)-enoyl-CoA + H2O</text>
        <dbReference type="Rhea" id="RHEA:16105"/>
        <dbReference type="ChEBI" id="CHEBI:15377"/>
        <dbReference type="ChEBI" id="CHEBI:57318"/>
        <dbReference type="ChEBI" id="CHEBI:58856"/>
        <dbReference type="EC" id="4.2.1.17"/>
    </reaction>
    <physiologicalReaction direction="right-to-left" evidence="3">
        <dbReference type="Rhea" id="RHEA:16107"/>
    </physiologicalReaction>
</comment>
<comment type="catalytic activity">
    <reaction evidence="2">
        <text>a (3E)-enoyl-CoA = a 4-saturated (2E)-enoyl-CoA</text>
        <dbReference type="Rhea" id="RHEA:45228"/>
        <dbReference type="ChEBI" id="CHEBI:58521"/>
        <dbReference type="ChEBI" id="CHEBI:85097"/>
        <dbReference type="EC" id="5.3.3.8"/>
    </reaction>
    <physiologicalReaction direction="left-to-right" evidence="2">
        <dbReference type="Rhea" id="RHEA:45229"/>
    </physiologicalReaction>
</comment>
<comment type="catalytic activity">
    <reaction evidence="2">
        <text>(3E)-hexenoyl-CoA = (2E)-hexenoyl-CoA</text>
        <dbReference type="Rhea" id="RHEA:45736"/>
        <dbReference type="ChEBI" id="CHEBI:62077"/>
        <dbReference type="ChEBI" id="CHEBI:84790"/>
    </reaction>
    <physiologicalReaction direction="left-to-right" evidence="2">
        <dbReference type="Rhea" id="RHEA:45737"/>
    </physiologicalReaction>
</comment>
<comment type="catalytic activity">
    <reaction evidence="3">
        <text>(3S)-3-hydroxybutanoyl-CoA = (2E)-butenoyl-CoA + H2O</text>
        <dbReference type="Rhea" id="RHEA:26558"/>
        <dbReference type="ChEBI" id="CHEBI:15377"/>
        <dbReference type="ChEBI" id="CHEBI:57316"/>
        <dbReference type="ChEBI" id="CHEBI:57332"/>
    </reaction>
    <physiologicalReaction direction="right-to-left" evidence="3">
        <dbReference type="Rhea" id="RHEA:26560"/>
    </physiologicalReaction>
</comment>
<comment type="catalytic activity">
    <reaction evidence="3">
        <text>3-hydroxyisovaleryl-CoA = 3-methylbut-2-enoyl-CoA + H2O</text>
        <dbReference type="Rhea" id="RHEA:31079"/>
        <dbReference type="ChEBI" id="CHEBI:15377"/>
        <dbReference type="ChEBI" id="CHEBI:57344"/>
        <dbReference type="ChEBI" id="CHEBI:62555"/>
    </reaction>
    <physiologicalReaction direction="right-to-left" evidence="3">
        <dbReference type="Rhea" id="RHEA:31081"/>
    </physiologicalReaction>
</comment>
<comment type="catalytic activity">
    <reaction evidence="3">
        <text>3-hydroxypropanoyl-CoA = acryloyl-CoA + H2O</text>
        <dbReference type="Rhea" id="RHEA:26518"/>
        <dbReference type="ChEBI" id="CHEBI:15377"/>
        <dbReference type="ChEBI" id="CHEBI:57367"/>
        <dbReference type="ChEBI" id="CHEBI:58528"/>
    </reaction>
    <physiologicalReaction direction="right-to-left" evidence="3">
        <dbReference type="Rhea" id="RHEA:26520"/>
    </physiologicalReaction>
</comment>
<comment type="catalytic activity">
    <reaction evidence="3">
        <text>3-hydroxybutanoyl-CoA = (2E)-butenoyl-CoA + H2O</text>
        <dbReference type="Rhea" id="RHEA:45584"/>
        <dbReference type="ChEBI" id="CHEBI:15377"/>
        <dbReference type="ChEBI" id="CHEBI:57332"/>
        <dbReference type="ChEBI" id="CHEBI:78611"/>
    </reaction>
    <physiologicalReaction direction="right-to-left" evidence="3">
        <dbReference type="Rhea" id="RHEA:45586"/>
    </physiologicalReaction>
</comment>
<comment type="catalytic activity">
    <reaction evidence="3">
        <text>2-methylpropenoyl-CoA + H2O = (S)-3-hydroxyisobutanoyl-CoA</text>
        <dbReference type="Rhea" id="RHEA:31175"/>
        <dbReference type="ChEBI" id="CHEBI:15377"/>
        <dbReference type="ChEBI" id="CHEBI:62500"/>
        <dbReference type="ChEBI" id="CHEBI:62611"/>
    </reaction>
    <physiologicalReaction direction="left-to-right" evidence="3">
        <dbReference type="Rhea" id="RHEA:31176"/>
    </physiologicalReaction>
</comment>
<comment type="catalytic activity">
    <reaction evidence="2">
        <text>(3S)-hydroxyhexanoyl-CoA = (2E)-hexenoyl-CoA + H2O</text>
        <dbReference type="Rhea" id="RHEA:30547"/>
        <dbReference type="ChEBI" id="CHEBI:15377"/>
        <dbReference type="ChEBI" id="CHEBI:62075"/>
        <dbReference type="ChEBI" id="CHEBI:62077"/>
    </reaction>
    <physiologicalReaction direction="right-to-left" evidence="2">
        <dbReference type="Rhea" id="RHEA:30549"/>
    </physiologicalReaction>
</comment>
<comment type="catalytic activity">
    <reaction evidence="2">
        <text>(3S)-hydroxydecanoyl-CoA = (2E)-decenoyl-CoA + H2O</text>
        <dbReference type="Rhea" id="RHEA:31191"/>
        <dbReference type="ChEBI" id="CHEBI:15377"/>
        <dbReference type="ChEBI" id="CHEBI:61406"/>
        <dbReference type="ChEBI" id="CHEBI:62616"/>
    </reaction>
    <physiologicalReaction direction="right-to-left" evidence="2">
        <dbReference type="Rhea" id="RHEA:31193"/>
    </physiologicalReaction>
</comment>
<comment type="pathway">
    <text evidence="3">Lipid metabolism; fatty acid beta-oxidation.</text>
</comment>
<comment type="subunit">
    <text evidence="2">Homohexamer; dimer of trimers.</text>
</comment>
<comment type="subcellular location">
    <subcellularLocation>
        <location evidence="2">Mitochondrion matrix</location>
    </subcellularLocation>
</comment>
<comment type="similarity">
    <text evidence="5">Belongs to the enoyl-CoA hydratase/isomerase family.</text>
</comment>
<evidence type="ECO:0000250" key="1"/>
<evidence type="ECO:0000250" key="2">
    <source>
        <dbReference type="UniProtKB" id="P14604"/>
    </source>
</evidence>
<evidence type="ECO:0000250" key="3">
    <source>
        <dbReference type="UniProtKB" id="P30084"/>
    </source>
</evidence>
<evidence type="ECO:0000250" key="4">
    <source>
        <dbReference type="UniProtKB" id="Q8BH95"/>
    </source>
</evidence>
<evidence type="ECO:0000305" key="5"/>
<organism>
    <name type="scientific">Pongo abelii</name>
    <name type="common">Sumatran orangutan</name>
    <name type="synonym">Pongo pygmaeus abelii</name>
    <dbReference type="NCBI Taxonomy" id="9601"/>
    <lineage>
        <taxon>Eukaryota</taxon>
        <taxon>Metazoa</taxon>
        <taxon>Chordata</taxon>
        <taxon>Craniata</taxon>
        <taxon>Vertebrata</taxon>
        <taxon>Euteleostomi</taxon>
        <taxon>Mammalia</taxon>
        <taxon>Eutheria</taxon>
        <taxon>Euarchontoglires</taxon>
        <taxon>Primates</taxon>
        <taxon>Haplorrhini</taxon>
        <taxon>Catarrhini</taxon>
        <taxon>Hominidae</taxon>
        <taxon>Pongo</taxon>
    </lineage>
</organism>
<accession>Q5R646</accession>
<protein>
    <recommendedName>
        <fullName>Enoyl-CoA hydratase, mitochondrial</fullName>
        <shortName>mECH</shortName>
        <shortName>mECH1</shortName>
        <ecNumber evidence="3">4.2.1.17</ecNumber>
        <ecNumber evidence="2">5.3.3.8</ecNumber>
    </recommendedName>
    <alternativeName>
        <fullName>Enoyl-CoA hydratase 1</fullName>
        <shortName>ECHS1</shortName>
    </alternativeName>
    <alternativeName>
        <fullName>Short-chain enoyl-CoA hydratase</fullName>
        <shortName>SCEH</shortName>
    </alternativeName>
</protein>
<reference key="1">
    <citation type="submission" date="2004-11" db="EMBL/GenBank/DDBJ databases">
        <authorList>
            <consortium name="The German cDNA consortium"/>
        </authorList>
    </citation>
    <scope>NUCLEOTIDE SEQUENCE [LARGE SCALE MRNA]</scope>
    <source>
        <tissue>Brain cortex</tissue>
    </source>
</reference>
<sequence length="290" mass="31428">MATLRVLLSCVRGPLRPPVRCPAWRPFASGANFEYIIAEKRGKNNTVGLIQLNRPKALNALCDGLIDELNQALKIFEEDPAVGAIVLTGGDKAFAAGADIKEMQNLSFQDCYSSKFLKHWDHLTQIKKPVIAAVNGYAFGGGCELAMMCDIIYAGEKAQFAQPEILIGTIPGAGGTQRLTRTVGKSLAMEMVLTGDRISAQDAKQAGLVSKICPVETLVEEAIQCAEKIASNSKIIAAMAKESVNAAFEMTLAEGSKLEKKLFYSTFATNDRKEGMTAFVEKRKANFKDQ</sequence>
<dbReference type="EC" id="4.2.1.17" evidence="3"/>
<dbReference type="EC" id="5.3.3.8" evidence="2"/>
<dbReference type="EMBL" id="CR860650">
    <property type="protein sequence ID" value="CAH92770.1"/>
    <property type="molecule type" value="mRNA"/>
</dbReference>
<dbReference type="RefSeq" id="NP_001126615.1">
    <property type="nucleotide sequence ID" value="NM_001133143.1"/>
</dbReference>
<dbReference type="SMR" id="Q5R646"/>
<dbReference type="FunCoup" id="Q5R646">
    <property type="interactions" value="1257"/>
</dbReference>
<dbReference type="STRING" id="9601.ENSPPYP00000003261"/>
<dbReference type="GeneID" id="100173612"/>
<dbReference type="KEGG" id="pon:100173612"/>
<dbReference type="CTD" id="1892"/>
<dbReference type="eggNOG" id="KOG1680">
    <property type="taxonomic scope" value="Eukaryota"/>
</dbReference>
<dbReference type="InParanoid" id="Q5R646"/>
<dbReference type="OrthoDB" id="2018133at2759"/>
<dbReference type="UniPathway" id="UPA00659"/>
<dbReference type="Proteomes" id="UP000001595">
    <property type="component" value="Unplaced"/>
</dbReference>
<dbReference type="GO" id="GO:0005759">
    <property type="term" value="C:mitochondrial matrix"/>
    <property type="evidence" value="ECO:0007669"/>
    <property type="project" value="UniProtKB-SubCell"/>
</dbReference>
<dbReference type="GO" id="GO:0043956">
    <property type="term" value="F:3-hydroxypropionyl-CoA dehydratase activity"/>
    <property type="evidence" value="ECO:0007669"/>
    <property type="project" value="RHEA"/>
</dbReference>
<dbReference type="GO" id="GO:0120092">
    <property type="term" value="F:crotonyl-CoA hydratase activity"/>
    <property type="evidence" value="ECO:0007669"/>
    <property type="project" value="RHEA"/>
</dbReference>
<dbReference type="GO" id="GO:0004165">
    <property type="term" value="F:delta(3)-delta(2)-enoyl-CoA isomerase activity"/>
    <property type="evidence" value="ECO:0007669"/>
    <property type="project" value="RHEA"/>
</dbReference>
<dbReference type="GO" id="GO:0004300">
    <property type="term" value="F:enoyl-CoA hydratase activity"/>
    <property type="evidence" value="ECO:0000250"/>
    <property type="project" value="UniProtKB"/>
</dbReference>
<dbReference type="GO" id="GO:0006635">
    <property type="term" value="P:fatty acid beta-oxidation"/>
    <property type="evidence" value="ECO:0000250"/>
    <property type="project" value="UniProtKB"/>
</dbReference>
<dbReference type="CDD" id="cd06558">
    <property type="entry name" value="crotonase-like"/>
    <property type="match status" value="1"/>
</dbReference>
<dbReference type="FunFam" id="3.90.226.10:FF:000213">
    <property type="entry name" value="Enoyl-CoA hydratase, mitochondrial"/>
    <property type="match status" value="1"/>
</dbReference>
<dbReference type="FunFam" id="1.10.12.10:FF:000001">
    <property type="entry name" value="Probable enoyl-CoA hydratase, mitochondrial"/>
    <property type="match status" value="1"/>
</dbReference>
<dbReference type="Gene3D" id="3.90.226.10">
    <property type="entry name" value="2-enoyl-CoA Hydratase, Chain A, domain 1"/>
    <property type="match status" value="1"/>
</dbReference>
<dbReference type="Gene3D" id="1.10.12.10">
    <property type="entry name" value="Lyase 2-enoyl-coa Hydratase, Chain A, domain 2"/>
    <property type="match status" value="1"/>
</dbReference>
<dbReference type="InterPro" id="IPR029045">
    <property type="entry name" value="ClpP/crotonase-like_dom_sf"/>
</dbReference>
<dbReference type="InterPro" id="IPR018376">
    <property type="entry name" value="Enoyl-CoA_hyd/isom_CS"/>
</dbReference>
<dbReference type="InterPro" id="IPR001753">
    <property type="entry name" value="Enoyl-CoA_hydra/iso"/>
</dbReference>
<dbReference type="InterPro" id="IPR014748">
    <property type="entry name" value="Enoyl-CoA_hydra_C"/>
</dbReference>
<dbReference type="PANTHER" id="PTHR11941:SF54">
    <property type="entry name" value="ENOYL-COA HYDRATASE, MITOCHONDRIAL"/>
    <property type="match status" value="1"/>
</dbReference>
<dbReference type="PANTHER" id="PTHR11941">
    <property type="entry name" value="ENOYL-COA HYDRATASE-RELATED"/>
    <property type="match status" value="1"/>
</dbReference>
<dbReference type="Pfam" id="PF00378">
    <property type="entry name" value="ECH_1"/>
    <property type="match status" value="1"/>
</dbReference>
<dbReference type="SUPFAM" id="SSF52096">
    <property type="entry name" value="ClpP/crotonase"/>
    <property type="match status" value="1"/>
</dbReference>
<dbReference type="PROSITE" id="PS00166">
    <property type="entry name" value="ENOYL_COA_HYDRATASE"/>
    <property type="match status" value="1"/>
</dbReference>
<proteinExistence type="evidence at transcript level"/>